<organism>
    <name type="scientific">Debaryomyces hansenii (strain ATCC 36239 / CBS 767 / BCRC 21394 / JCM 1990 / NBRC 0083 / IGC 2968)</name>
    <name type="common">Yeast</name>
    <name type="synonym">Torulaspora hansenii</name>
    <dbReference type="NCBI Taxonomy" id="284592"/>
    <lineage>
        <taxon>Eukaryota</taxon>
        <taxon>Fungi</taxon>
        <taxon>Dikarya</taxon>
        <taxon>Ascomycota</taxon>
        <taxon>Saccharomycotina</taxon>
        <taxon>Pichiomycetes</taxon>
        <taxon>Debaryomycetaceae</taxon>
        <taxon>Debaryomyces</taxon>
    </lineage>
</organism>
<evidence type="ECO:0000250" key="1"/>
<evidence type="ECO:0000255" key="2"/>
<evidence type="ECO:0000256" key="3">
    <source>
        <dbReference type="SAM" id="MobiDB-lite"/>
    </source>
</evidence>
<evidence type="ECO:0000305" key="4"/>
<sequence>MSSNGIGLQTARGSGTTGHIQKNVASNKDHASIKDDKSGHFRRRQLSNDRKLKYDKHISTRNNRDEAKQEIRSHDLKRDVEVKCMELRDALEDESEEELTIEKKVNELRDKLLNSPMTARKQTSLDDRKSDSSHASYENKINDHKDNDNASKNDIEDSFSYKRRYTDCDEKGERLKIRR</sequence>
<proteinExistence type="inferred from homology"/>
<reference key="1">
    <citation type="journal article" date="2004" name="Nature">
        <title>Genome evolution in yeasts.</title>
        <authorList>
            <person name="Dujon B."/>
            <person name="Sherman D."/>
            <person name="Fischer G."/>
            <person name="Durrens P."/>
            <person name="Casaregola S."/>
            <person name="Lafontaine I."/>
            <person name="de Montigny J."/>
            <person name="Marck C."/>
            <person name="Neuveglise C."/>
            <person name="Talla E."/>
            <person name="Goffard N."/>
            <person name="Frangeul L."/>
            <person name="Aigle M."/>
            <person name="Anthouard V."/>
            <person name="Babour A."/>
            <person name="Barbe V."/>
            <person name="Barnay S."/>
            <person name="Blanchin S."/>
            <person name="Beckerich J.-M."/>
            <person name="Beyne E."/>
            <person name="Bleykasten C."/>
            <person name="Boisrame A."/>
            <person name="Boyer J."/>
            <person name="Cattolico L."/>
            <person name="Confanioleri F."/>
            <person name="de Daruvar A."/>
            <person name="Despons L."/>
            <person name="Fabre E."/>
            <person name="Fairhead C."/>
            <person name="Ferry-Dumazet H."/>
            <person name="Groppi A."/>
            <person name="Hantraye F."/>
            <person name="Hennequin C."/>
            <person name="Jauniaux N."/>
            <person name="Joyet P."/>
            <person name="Kachouri R."/>
            <person name="Kerrest A."/>
            <person name="Koszul R."/>
            <person name="Lemaire M."/>
            <person name="Lesur I."/>
            <person name="Ma L."/>
            <person name="Muller H."/>
            <person name="Nicaud J.-M."/>
            <person name="Nikolski M."/>
            <person name="Oztas S."/>
            <person name="Ozier-Kalogeropoulos O."/>
            <person name="Pellenz S."/>
            <person name="Potier S."/>
            <person name="Richard G.-F."/>
            <person name="Straub M.-L."/>
            <person name="Suleau A."/>
            <person name="Swennen D."/>
            <person name="Tekaia F."/>
            <person name="Wesolowski-Louvel M."/>
            <person name="Westhof E."/>
            <person name="Wirth B."/>
            <person name="Zeniou-Meyer M."/>
            <person name="Zivanovic Y."/>
            <person name="Bolotin-Fukuhara M."/>
            <person name="Thierry A."/>
            <person name="Bouchier C."/>
            <person name="Caudron B."/>
            <person name="Scarpelli C."/>
            <person name="Gaillardin C."/>
            <person name="Weissenbach J."/>
            <person name="Wincker P."/>
            <person name="Souciet J.-L."/>
        </authorList>
    </citation>
    <scope>NUCLEOTIDE SEQUENCE [LARGE SCALE GENOMIC DNA]</scope>
    <source>
        <strain>ATCC 36239 / CBS 767 / BCRC 21394 / JCM 1990 / NBRC 0083 / IGC 2968</strain>
    </source>
</reference>
<gene>
    <name type="primary">CWC21</name>
    <name type="ordered locus">DEHA2B12562g</name>
</gene>
<name>CWC21_DEBHA</name>
<feature type="chain" id="PRO_0000123498" description="Pre-mRNA-splicing factor CWC21">
    <location>
        <begin position="1"/>
        <end position="179"/>
    </location>
</feature>
<feature type="domain" description="CWF21" evidence="2">
    <location>
        <begin position="72"/>
        <end position="115"/>
    </location>
</feature>
<feature type="region of interest" description="Disordered" evidence="3">
    <location>
        <begin position="1"/>
        <end position="72"/>
    </location>
</feature>
<feature type="region of interest" description="Disordered" evidence="3">
    <location>
        <begin position="113"/>
        <end position="159"/>
    </location>
</feature>
<feature type="coiled-coil region" evidence="2">
    <location>
        <begin position="59"/>
        <end position="157"/>
    </location>
</feature>
<feature type="compositionally biased region" description="Polar residues" evidence="3">
    <location>
        <begin position="1"/>
        <end position="26"/>
    </location>
</feature>
<feature type="compositionally biased region" description="Basic and acidic residues" evidence="3">
    <location>
        <begin position="27"/>
        <end position="39"/>
    </location>
</feature>
<feature type="compositionally biased region" description="Basic and acidic residues" evidence="3">
    <location>
        <begin position="46"/>
        <end position="72"/>
    </location>
</feature>
<feature type="compositionally biased region" description="Basic and acidic residues" evidence="3">
    <location>
        <begin position="123"/>
        <end position="132"/>
    </location>
</feature>
<feature type="compositionally biased region" description="Basic and acidic residues" evidence="3">
    <location>
        <begin position="140"/>
        <end position="155"/>
    </location>
</feature>
<protein>
    <recommendedName>
        <fullName>Pre-mRNA-splicing factor CWC21</fullName>
    </recommendedName>
</protein>
<accession>Q6BWB8</accession>
<keyword id="KW-0175">Coiled coil</keyword>
<keyword id="KW-0963">Cytoplasm</keyword>
<keyword id="KW-0507">mRNA processing</keyword>
<keyword id="KW-0508">mRNA splicing</keyword>
<keyword id="KW-0539">Nucleus</keyword>
<keyword id="KW-1185">Reference proteome</keyword>
<keyword id="KW-0747">Spliceosome</keyword>
<dbReference type="EMBL" id="CR382134">
    <property type="protein sequence ID" value="CAG85505.1"/>
    <property type="molecule type" value="Genomic_DNA"/>
</dbReference>
<dbReference type="RefSeq" id="XP_457501.1">
    <property type="nucleotide sequence ID" value="XM_457501.1"/>
</dbReference>
<dbReference type="SMR" id="Q6BWB8"/>
<dbReference type="FunCoup" id="Q6BWB8">
    <property type="interactions" value="65"/>
</dbReference>
<dbReference type="STRING" id="284592.Q6BWB8"/>
<dbReference type="GeneID" id="2913453"/>
<dbReference type="KEGG" id="dha:DEHA2B12562g"/>
<dbReference type="VEuPathDB" id="FungiDB:DEHA2B12562g"/>
<dbReference type="eggNOG" id="KOG1869">
    <property type="taxonomic scope" value="Eukaryota"/>
</dbReference>
<dbReference type="HOGENOM" id="CLU_067891_3_0_1"/>
<dbReference type="InParanoid" id="Q6BWB8"/>
<dbReference type="OMA" id="RIEVKCM"/>
<dbReference type="OrthoDB" id="10267305at2759"/>
<dbReference type="Proteomes" id="UP000000599">
    <property type="component" value="Chromosome B"/>
</dbReference>
<dbReference type="GO" id="GO:0005737">
    <property type="term" value="C:cytoplasm"/>
    <property type="evidence" value="ECO:0007669"/>
    <property type="project" value="UniProtKB-SubCell"/>
</dbReference>
<dbReference type="GO" id="GO:0005681">
    <property type="term" value="C:spliceosomal complex"/>
    <property type="evidence" value="ECO:0007669"/>
    <property type="project" value="UniProtKB-KW"/>
</dbReference>
<dbReference type="GO" id="GO:0006397">
    <property type="term" value="P:mRNA processing"/>
    <property type="evidence" value="ECO:0007669"/>
    <property type="project" value="UniProtKB-KW"/>
</dbReference>
<dbReference type="GO" id="GO:0008380">
    <property type="term" value="P:RNA splicing"/>
    <property type="evidence" value="ECO:0007669"/>
    <property type="project" value="UniProtKB-KW"/>
</dbReference>
<dbReference type="CDD" id="cd21372">
    <property type="entry name" value="cwf21_CWC21-like"/>
    <property type="match status" value="1"/>
</dbReference>
<dbReference type="Gene3D" id="6.10.140.420">
    <property type="match status" value="1"/>
</dbReference>
<dbReference type="InterPro" id="IPR051372">
    <property type="entry name" value="CWC21"/>
</dbReference>
<dbReference type="InterPro" id="IPR013170">
    <property type="entry name" value="mRNA_splic_Cwf21_dom"/>
</dbReference>
<dbReference type="PANTHER" id="PTHR36562">
    <property type="entry name" value="SERINE/ARGININE REPETITIVE MATRIX 2"/>
    <property type="match status" value="1"/>
</dbReference>
<dbReference type="PANTHER" id="PTHR36562:SF5">
    <property type="entry name" value="SERINE_ARGININE REPETITIVE MATRIX 2"/>
    <property type="match status" value="1"/>
</dbReference>
<dbReference type="Pfam" id="PF08312">
    <property type="entry name" value="cwf21"/>
    <property type="match status" value="1"/>
</dbReference>
<dbReference type="SMART" id="SM01115">
    <property type="entry name" value="cwf21"/>
    <property type="match status" value="1"/>
</dbReference>
<comment type="function">
    <text evidence="1">Involved in pre-mRNA splicing. May function at or prior to the first catalytic step of splicing at the catalytic center of the spliceosome. May do so by stabilizing the catalytic center or the position of the RNA substrate (By similarity).</text>
</comment>
<comment type="subunit">
    <text evidence="1">Associates with the NTC complex (or PRP19-associated complex). The NTC complex associates with the spliceosome after the release of the U1 and U4 snRNAs and forms the CWC spliceosome subcomplex reminiscent of a late-stage spliceosome.</text>
</comment>
<comment type="subcellular location">
    <subcellularLocation>
        <location evidence="1">Cytoplasm</location>
    </subcellularLocation>
    <subcellularLocation>
        <location evidence="1">Nucleus</location>
    </subcellularLocation>
</comment>
<comment type="similarity">
    <text evidence="4">Belongs to the CWC21 family.</text>
</comment>